<sequence>MMIPIRCFTCGSLIADKWQPFITRVNAGENPGKVLDDLGVKRYCCRRMLLSHIDIISEVIHYTRPI</sequence>
<proteinExistence type="evidence at protein level"/>
<name>RPO10_SACSH</name>
<protein>
    <recommendedName>
        <fullName evidence="1 5">DNA-directed RNA polymerase subunit Rpo10</fullName>
        <ecNumber evidence="1">2.7.7.6</ecNumber>
    </recommendedName>
    <alternativeName>
        <fullName evidence="1">DNA-directed RNA polymerase subunit N</fullName>
    </alternativeName>
</protein>
<gene>
    <name evidence="1 5" type="primary">rpo10</name>
    <name evidence="1" type="synonym">rpoN</name>
    <name evidence="6" type="ORF">J5U23_00180</name>
</gene>
<keyword id="KW-0002">3D-structure</keyword>
<keyword id="KW-0963">Cytoplasm</keyword>
<keyword id="KW-0240">DNA-directed RNA polymerase</keyword>
<keyword id="KW-0479">Metal-binding</keyword>
<keyword id="KW-0548">Nucleotidyltransferase</keyword>
<keyword id="KW-0804">Transcription</keyword>
<keyword id="KW-0808">Transferase</keyword>
<keyword id="KW-0862">Zinc</keyword>
<evidence type="ECO:0000255" key="1">
    <source>
        <dbReference type="HAMAP-Rule" id="MF_00250"/>
    </source>
</evidence>
<evidence type="ECO:0000269" key="2">
    <source>
    </source>
</evidence>
<evidence type="ECO:0000269" key="3">
    <source>
    </source>
</evidence>
<evidence type="ECO:0000269" key="4">
    <source>
    </source>
</evidence>
<evidence type="ECO:0000303" key="5">
    <source>
    </source>
</evidence>
<evidence type="ECO:0000312" key="6">
    <source>
        <dbReference type="EMBL" id="QXJ27316.1"/>
    </source>
</evidence>
<evidence type="ECO:0007744" key="7">
    <source>
        <dbReference type="PDB" id="2WAQ"/>
    </source>
</evidence>
<evidence type="ECO:0007744" key="8">
    <source>
        <dbReference type="PDB" id="2WB1"/>
    </source>
</evidence>
<evidence type="ECO:0007744" key="9">
    <source>
        <dbReference type="PDB" id="2Y0S"/>
    </source>
</evidence>
<evidence type="ECO:0007744" key="10">
    <source>
        <dbReference type="PDB" id="4AYB"/>
    </source>
</evidence>
<evidence type="ECO:0007744" key="11">
    <source>
        <dbReference type="PDB" id="4V8S"/>
    </source>
</evidence>
<evidence type="ECO:0007829" key="12">
    <source>
        <dbReference type="PDB" id="2WAQ"/>
    </source>
</evidence>
<evidence type="ECO:0007829" key="13">
    <source>
        <dbReference type="PDB" id="4AYB"/>
    </source>
</evidence>
<accession>B8YB63</accession>
<accession>A0A8F5GS12</accession>
<reference evidence="7 8" key="1">
    <citation type="journal article" date="2009" name="PLoS Biol.">
        <title>Evolution of complex RNA polymerases: the complete archaeal RNA polymerase structure.</title>
        <authorList>
            <person name="Korkhin Y."/>
            <person name="Unligil U.M."/>
            <person name="Littlefield O."/>
            <person name="Nelson P.J."/>
            <person name="Stuart D.I."/>
            <person name="Sigler P.B."/>
            <person name="Bell S.D."/>
            <person name="Abrescia N.G."/>
        </authorList>
    </citation>
    <scope>NUCLEOTIDE SEQUENCE [GENOMIC DNA]</scope>
    <scope>X-RAY CRYSTALLOGRAPHY (3.35 ANGSTROMS) OF THE RNA POLYMERASE COMPLEX IN COMPLEX WITH ZINC</scope>
    <scope>COFACTOR</scope>
    <scope>SUBUNIT</scope>
    <scope>NOMENCLATURE</scope>
    <source>
        <strain>ATCC 51178 / DSM 5389 / JCM 8931 / NBRC 15437 / B12</strain>
    </source>
</reference>
<reference evidence="6" key="2">
    <citation type="journal article" date="2021" name="Environ. Microbiol.">
        <title>New insights into the diversity and evolution of the archaeal mobilome from three complete genomes of Saccharolobus shibatae.</title>
        <authorList>
            <person name="Medvedeva S."/>
            <person name="Brandt D."/>
            <person name="Cvirkaite-Krupovic V."/>
            <person name="Liu Y."/>
            <person name="Severinov K."/>
            <person name="Ishino S."/>
            <person name="Ishino Y."/>
            <person name="Prangishvili D."/>
            <person name="Kalinowski J."/>
            <person name="Krupovic M."/>
        </authorList>
    </citation>
    <scope>NUCLEOTIDE SEQUENCE [LARGE SCALE GENOMIC DNA]</scope>
    <source>
        <strain>ATCC 51178 / DSM 5389 / JCM 8931 / NBRC 15437 / B12</strain>
    </source>
</reference>
<reference evidence="9" key="3">
    <citation type="journal article" date="2011" name="Biochem. Soc. Trans.">
        <title>Archaeal RNA polymerase: the influence of the protruding stalk in crystal packing and preliminary biophysical analysis of the Rpo13 subunit.</title>
        <authorList>
            <person name="Wojtas M."/>
            <person name="Peralta B."/>
            <person name="Ondiviela M."/>
            <person name="Mogni M."/>
            <person name="Bell S.D."/>
            <person name="Abrescia N.G."/>
        </authorList>
    </citation>
    <scope>X-RAY CRYSTALLOGRAPHY (3.80 ANGSTROMS) OF THE RNA POLYMERASE COMPLEX IN COMPLEX WITH ZINC</scope>
    <scope>COFACTOR</scope>
    <scope>SUBUNIT</scope>
    <source>
        <strain>ATCC 51178 / DSM 5389 / JCM 8931 / NBRC 15437 / B12</strain>
    </source>
</reference>
<reference evidence="10 11" key="4">
    <citation type="journal article" date="2012" name="Nucleic Acids Res.">
        <title>Structural and functional analyses of the interaction of archaeal RNA polymerase with DNA.</title>
        <authorList>
            <person name="Wojtas M.N."/>
            <person name="Mogni M."/>
            <person name="Millet O."/>
            <person name="Bell S.D."/>
            <person name="Abrescia N.G."/>
        </authorList>
    </citation>
    <scope>X-RAY CRYSTALLOGRAPHY (3.20 ANGSTROMS) OF THE RNA POLYMERASE COMPLEX IN COMPLEX WITH ZINC WITH AND WITHOUT DNA</scope>
    <scope>COFACTOR</scope>
    <scope>SUBUNIT</scope>
    <scope>SUBCELLULAR LOCATION</scope>
    <source>
        <strain>ATCC 51178 / DSM 5389 / JCM 8931 / NBRC 15437 / B12</strain>
    </source>
</reference>
<dbReference type="EC" id="2.7.7.6" evidence="1"/>
<dbReference type="EMBL" id="FJ515675">
    <property type="protein sequence ID" value="ACL36498.1"/>
    <property type="molecule type" value="Genomic_DNA"/>
</dbReference>
<dbReference type="EMBL" id="CP077717">
    <property type="protein sequence ID" value="QXJ27316.1"/>
    <property type="molecule type" value="Genomic_DNA"/>
</dbReference>
<dbReference type="RefSeq" id="WP_012712019.1">
    <property type="nucleotide sequence ID" value="NZ_CP077717.1"/>
</dbReference>
<dbReference type="PDB" id="2WAQ">
    <property type="method" value="X-ray"/>
    <property type="resolution" value="3.35 A"/>
    <property type="chains" value="N=1-66"/>
</dbReference>
<dbReference type="PDB" id="2WB1">
    <property type="method" value="X-ray"/>
    <property type="resolution" value="3.52 A"/>
    <property type="chains" value="N/O=1-66"/>
</dbReference>
<dbReference type="PDB" id="2Y0S">
    <property type="method" value="X-ray"/>
    <property type="resolution" value="3.80 A"/>
    <property type="chains" value="N/O=1-66"/>
</dbReference>
<dbReference type="PDB" id="4AYB">
    <property type="method" value="X-ray"/>
    <property type="resolution" value="3.20 A"/>
    <property type="chains" value="N=1-66"/>
</dbReference>
<dbReference type="PDB" id="4V8S">
    <property type="method" value="X-ray"/>
    <property type="resolution" value="4.32 A"/>
    <property type="chains" value="AO/BN=1-66"/>
</dbReference>
<dbReference type="PDBsum" id="2WAQ"/>
<dbReference type="PDBsum" id="2WB1"/>
<dbReference type="PDBsum" id="2Y0S"/>
<dbReference type="PDBsum" id="4AYB"/>
<dbReference type="PDBsum" id="4V8S"/>
<dbReference type="SMR" id="B8YB63"/>
<dbReference type="KEGG" id="sshi:J5U23_00180"/>
<dbReference type="OrthoDB" id="371754at2157"/>
<dbReference type="BRENDA" id="2.7.7.6">
    <property type="organism ID" value="6162"/>
</dbReference>
<dbReference type="EvolutionaryTrace" id="B8YB63"/>
<dbReference type="Proteomes" id="UP000694018">
    <property type="component" value="Chromosome"/>
</dbReference>
<dbReference type="GO" id="GO:0005737">
    <property type="term" value="C:cytoplasm"/>
    <property type="evidence" value="ECO:0007669"/>
    <property type="project" value="UniProtKB-SubCell"/>
</dbReference>
<dbReference type="GO" id="GO:0000428">
    <property type="term" value="C:DNA-directed RNA polymerase complex"/>
    <property type="evidence" value="ECO:0000314"/>
    <property type="project" value="UniProtKB"/>
</dbReference>
<dbReference type="GO" id="GO:0003677">
    <property type="term" value="F:DNA binding"/>
    <property type="evidence" value="ECO:0007669"/>
    <property type="project" value="InterPro"/>
</dbReference>
<dbReference type="GO" id="GO:0003899">
    <property type="term" value="F:DNA-directed RNA polymerase activity"/>
    <property type="evidence" value="ECO:0007669"/>
    <property type="project" value="UniProtKB-UniRule"/>
</dbReference>
<dbReference type="GO" id="GO:0008270">
    <property type="term" value="F:zinc ion binding"/>
    <property type="evidence" value="ECO:0007669"/>
    <property type="project" value="UniProtKB-UniRule"/>
</dbReference>
<dbReference type="GO" id="GO:0006351">
    <property type="term" value="P:DNA-templated transcription"/>
    <property type="evidence" value="ECO:0007669"/>
    <property type="project" value="UniProtKB-UniRule"/>
</dbReference>
<dbReference type="FunFam" id="1.10.10.60:FF:000335">
    <property type="entry name" value="DNA-directed RNA polymerase subunit N, putative"/>
    <property type="match status" value="1"/>
</dbReference>
<dbReference type="Gene3D" id="1.10.10.60">
    <property type="entry name" value="Homeodomain-like"/>
    <property type="match status" value="1"/>
</dbReference>
<dbReference type="HAMAP" id="MF_00250">
    <property type="entry name" value="RNApol_arch_Rpo10"/>
    <property type="match status" value="1"/>
</dbReference>
<dbReference type="InterPro" id="IPR023580">
    <property type="entry name" value="RNA_pol_su_RPB10"/>
</dbReference>
<dbReference type="InterPro" id="IPR020789">
    <property type="entry name" value="RNA_pol_suN_Zn-BS"/>
</dbReference>
<dbReference type="InterPro" id="IPR000268">
    <property type="entry name" value="RPABC5/Rpb10"/>
</dbReference>
<dbReference type="NCBIfam" id="NF003089">
    <property type="entry name" value="PRK04016.1"/>
    <property type="match status" value="1"/>
</dbReference>
<dbReference type="PANTHER" id="PTHR23431:SF3">
    <property type="entry name" value="DNA-DIRECTED RNA POLYMERASES I, II, AND III SUBUNIT RPABC5"/>
    <property type="match status" value="1"/>
</dbReference>
<dbReference type="PANTHER" id="PTHR23431">
    <property type="entry name" value="DNA-DIRECTED RNA POLYMERASES I, II, AND III SUBUNIT RPABC5 FAMILY MEMBER"/>
    <property type="match status" value="1"/>
</dbReference>
<dbReference type="Pfam" id="PF01194">
    <property type="entry name" value="RNA_pol_N"/>
    <property type="match status" value="1"/>
</dbReference>
<dbReference type="PIRSF" id="PIRSF005653">
    <property type="entry name" value="RNA_pol_N/8_sub"/>
    <property type="match status" value="1"/>
</dbReference>
<dbReference type="SUPFAM" id="SSF46924">
    <property type="entry name" value="RNA polymerase subunit RPB10"/>
    <property type="match status" value="1"/>
</dbReference>
<dbReference type="PROSITE" id="PS01112">
    <property type="entry name" value="RNA_POL_N_8KD"/>
    <property type="match status" value="1"/>
</dbReference>
<feature type="chain" id="PRO_0000453815" description="DNA-directed RNA polymerase subunit Rpo10">
    <location>
        <begin position="1"/>
        <end position="66"/>
    </location>
</feature>
<feature type="binding site" evidence="1 2 7 8 9">
    <location>
        <position position="7"/>
    </location>
    <ligand>
        <name>Zn(2+)</name>
        <dbReference type="ChEBI" id="CHEBI:29105"/>
    </ligand>
</feature>
<feature type="binding site" evidence="1 2 7 8 9 10 11">
    <location>
        <position position="10"/>
    </location>
    <ligand>
        <name>Zn(2+)</name>
        <dbReference type="ChEBI" id="CHEBI:29105"/>
    </ligand>
</feature>
<feature type="binding site" evidence="1 2 7 8 9 11">
    <location>
        <position position="44"/>
    </location>
    <ligand>
        <name>Zn(2+)</name>
        <dbReference type="ChEBI" id="CHEBI:29105"/>
    </ligand>
</feature>
<feature type="binding site" evidence="1 2 7 8 9 11">
    <location>
        <position position="45"/>
    </location>
    <ligand>
        <name>Zn(2+)</name>
        <dbReference type="ChEBI" id="CHEBI:29105"/>
    </ligand>
</feature>
<feature type="turn" evidence="13">
    <location>
        <begin position="8"/>
        <end position="10"/>
    </location>
</feature>
<feature type="turn" evidence="13">
    <location>
        <begin position="15"/>
        <end position="17"/>
    </location>
</feature>
<feature type="helix" evidence="13">
    <location>
        <begin position="18"/>
        <end position="26"/>
    </location>
</feature>
<feature type="helix" evidence="13">
    <location>
        <begin position="31"/>
        <end position="37"/>
    </location>
</feature>
<feature type="helix" evidence="13">
    <location>
        <begin position="44"/>
        <end position="50"/>
    </location>
</feature>
<feature type="turn" evidence="13">
    <location>
        <begin position="56"/>
        <end position="59"/>
    </location>
</feature>
<feature type="turn" evidence="12">
    <location>
        <begin position="60"/>
        <end position="62"/>
    </location>
</feature>
<comment type="function">
    <text evidence="1">DNA-dependent RNA polymerase (RNAP) catalyzes the transcription of DNA into RNA using the four ribonucleoside triphosphates as substrates.</text>
</comment>
<comment type="catalytic activity">
    <reaction evidence="1">
        <text>RNA(n) + a ribonucleoside 5'-triphosphate = RNA(n+1) + diphosphate</text>
        <dbReference type="Rhea" id="RHEA:21248"/>
        <dbReference type="Rhea" id="RHEA-COMP:14527"/>
        <dbReference type="Rhea" id="RHEA-COMP:17342"/>
        <dbReference type="ChEBI" id="CHEBI:33019"/>
        <dbReference type="ChEBI" id="CHEBI:61557"/>
        <dbReference type="ChEBI" id="CHEBI:140395"/>
        <dbReference type="EC" id="2.7.7.6"/>
    </reaction>
</comment>
<comment type="cofactor">
    <cofactor evidence="1 2 7 8 9">
        <name>Zn(2+)</name>
        <dbReference type="ChEBI" id="CHEBI:29105"/>
    </cofactor>
    <text evidence="1 2 7 8 9">Binds 1 Zn(2+) per monomer.</text>
</comment>
<comment type="subunit">
    <text evidence="2 3 4">Part of the 13-subunit RNA polymerase complex.</text>
</comment>
<comment type="subcellular location">
    <subcellularLocation>
        <location evidence="1 4">Cytoplasm</location>
    </subcellularLocation>
</comment>
<comment type="similarity">
    <text evidence="1">Belongs to the archaeal Rpo10/eukaryotic RPB10 RNA polymerase subunit family.</text>
</comment>
<organism>
    <name type="scientific">Saccharolobus shibatae (strain ATCC 51178 / DSM 5389 / JCM 8931 / NBRC 15437 / B12)</name>
    <name type="common">Sulfolobus shibatae</name>
    <dbReference type="NCBI Taxonomy" id="523848"/>
    <lineage>
        <taxon>Archaea</taxon>
        <taxon>Thermoproteota</taxon>
        <taxon>Thermoprotei</taxon>
        <taxon>Sulfolobales</taxon>
        <taxon>Sulfolobaceae</taxon>
        <taxon>Saccharolobus</taxon>
    </lineage>
</organism>